<proteinExistence type="evidence at protein level"/>
<protein>
    <recommendedName>
        <fullName evidence="3">Scolopendra 20417.15 Da toxin</fullName>
    </recommendedName>
    <alternativeName>
        <fullName evidence="4">Cysteine-rich venom protein</fullName>
        <shortName evidence="4">CRVP</shortName>
    </alternativeName>
</protein>
<sequence>CQMVERGLDAKAKAAMLDAHDXARQKVANGQEAGQPGAXNMKELH</sequence>
<accession>P0C8D7</accession>
<name>VA5B_SCOVN</name>
<organism>
    <name type="scientific">Scolopendra viridicornis nigra</name>
    <name type="common">Brazilian giant centipede</name>
    <dbReference type="NCBI Taxonomy" id="486497"/>
    <lineage>
        <taxon>Eukaryota</taxon>
        <taxon>Metazoa</taxon>
        <taxon>Ecdysozoa</taxon>
        <taxon>Arthropoda</taxon>
        <taxon>Myriapoda</taxon>
        <taxon>Chilopoda</taxon>
        <taxon>Pleurostigmophora</taxon>
        <taxon>Scolopendromorpha</taxon>
        <taxon>Scolopendridae</taxon>
        <taxon>Scolopendra</taxon>
    </lineage>
</organism>
<comment type="subcellular location">
    <subcellularLocation>
        <location evidence="2">Secreted</location>
    </subcellularLocation>
</comment>
<comment type="tissue specificity">
    <text evidence="5">Expressed by the venom gland.</text>
</comment>
<comment type="PTM">
    <text evidence="4">Contains 3 disulfide bonds.</text>
</comment>
<comment type="mass spectrometry"/>
<comment type="miscellaneous">
    <text evidence="5">Shows similarity with the venom allergen 5 from wasps. This similarity may explain why patients with allergies to centipede venom also display allergic reaction to wasp, honey bee and/or yellow jacket venom.</text>
</comment>
<comment type="similarity">
    <text evidence="4">Belongs to the CRISP family. Venom allergen 5-like subfamily.</text>
</comment>
<evidence type="ECO:0000256" key="1">
    <source>
        <dbReference type="SAM" id="MobiDB-lite"/>
    </source>
</evidence>
<evidence type="ECO:0000269" key="2">
    <source>
    </source>
</evidence>
<evidence type="ECO:0000303" key="3">
    <source>
    </source>
</evidence>
<evidence type="ECO:0000305" key="4"/>
<evidence type="ECO:0000305" key="5">
    <source>
    </source>
</evidence>
<keyword id="KW-0903">Direct protein sequencing</keyword>
<keyword id="KW-1015">Disulfide bond</keyword>
<keyword id="KW-0528">Neurotoxin</keyword>
<keyword id="KW-0964">Secreted</keyword>
<keyword id="KW-0800">Toxin</keyword>
<feature type="chain" id="PRO_0000352873" description="Scolopendra 20417.15 Da toxin">
    <location>
        <begin position="1"/>
        <end position="45" status="greater than"/>
    </location>
</feature>
<feature type="region of interest" description="Disordered" evidence="1">
    <location>
        <begin position="26"/>
        <end position="45"/>
    </location>
</feature>
<feature type="unsure residue" evidence="4">
    <location>
        <position position="1"/>
    </location>
</feature>
<feature type="non-terminal residue">
    <location>
        <position position="45"/>
    </location>
</feature>
<dbReference type="GO" id="GO:0005576">
    <property type="term" value="C:extracellular region"/>
    <property type="evidence" value="ECO:0007669"/>
    <property type="project" value="UniProtKB-SubCell"/>
</dbReference>
<dbReference type="GO" id="GO:0090729">
    <property type="term" value="F:toxin activity"/>
    <property type="evidence" value="ECO:0007669"/>
    <property type="project" value="UniProtKB-KW"/>
</dbReference>
<dbReference type="Gene3D" id="3.40.33.10">
    <property type="entry name" value="CAP"/>
    <property type="match status" value="1"/>
</dbReference>
<dbReference type="InterPro" id="IPR035940">
    <property type="entry name" value="CAP_sf"/>
</dbReference>
<dbReference type="SUPFAM" id="SSF55797">
    <property type="entry name" value="PR-1-like"/>
    <property type="match status" value="1"/>
</dbReference>
<reference key="1">
    <citation type="journal article" date="2007" name="Toxicon">
        <title>Venomic analyses of Scolopendra viridicornis nigra and Scolopendra angulata (Centipede, Scolopendromorpha): shedding light on venoms from a neglected group.</title>
        <authorList>
            <person name="Rates B."/>
            <person name="Bemquerer M.P."/>
            <person name="Richardson M."/>
            <person name="Borges M.H."/>
            <person name="Morales R.A.V."/>
            <person name="De Lima M.E."/>
            <person name="Pimenta A.M.C."/>
        </authorList>
    </citation>
    <scope>PROTEIN SEQUENCE</scope>
    <scope>MASS SPECTROMETRY</scope>
    <scope>SUBCELLULAR LOCATION</scope>
    <source>
        <tissue>Venom</tissue>
    </source>
</reference>